<keyword id="KW-0067">ATP-binding</keyword>
<keyword id="KW-0156">Chromatin regulator</keyword>
<keyword id="KW-0418">Kinase</keyword>
<keyword id="KW-0472">Membrane</keyword>
<keyword id="KW-0547">Nucleotide-binding</keyword>
<keyword id="KW-0539">Nucleus</keyword>
<keyword id="KW-0597">Phosphoprotein</keyword>
<keyword id="KW-1185">Reference proteome</keyword>
<keyword id="KW-0677">Repeat</keyword>
<keyword id="KW-0727">SH2 domain</keyword>
<keyword id="KW-0808">Transferase</keyword>
<keyword id="KW-0829">Tyrosine-protein kinase</keyword>
<evidence type="ECO:0000250" key="1"/>
<evidence type="ECO:0000250" key="2">
    <source>
        <dbReference type="UniProtKB" id="O60674"/>
    </source>
</evidence>
<evidence type="ECO:0000250" key="3">
    <source>
        <dbReference type="UniProtKB" id="Q62120"/>
    </source>
</evidence>
<evidence type="ECO:0000255" key="4">
    <source>
        <dbReference type="PROSITE-ProRule" id="PRU00084"/>
    </source>
</evidence>
<evidence type="ECO:0000255" key="5">
    <source>
        <dbReference type="PROSITE-ProRule" id="PRU00159"/>
    </source>
</evidence>
<evidence type="ECO:0000255" key="6">
    <source>
        <dbReference type="PROSITE-ProRule" id="PRU00191"/>
    </source>
</evidence>
<evidence type="ECO:0000255" key="7">
    <source>
        <dbReference type="PROSITE-ProRule" id="PRU10028"/>
    </source>
</evidence>
<protein>
    <recommendedName>
        <fullName evidence="2">Tyrosine-protein kinase JAK2</fullName>
        <ecNumber evidence="2">2.7.10.2</ecNumber>
    </recommendedName>
    <alternativeName>
        <fullName>Janus kinase 2</fullName>
        <shortName>JAK-2</shortName>
    </alternativeName>
</protein>
<feature type="chain" id="PRO_0000324095" description="Tyrosine-protein kinase JAK2">
    <location>
        <begin position="1"/>
        <end position="1129"/>
    </location>
</feature>
<feature type="domain" description="FERM" evidence="4">
    <location>
        <begin position="35"/>
        <end position="378"/>
    </location>
</feature>
<feature type="domain" description="SH2; atypical" evidence="6">
    <location>
        <begin position="399"/>
        <end position="480"/>
    </location>
</feature>
<feature type="domain" description="Protein kinase 1" evidence="5">
    <location>
        <begin position="542"/>
        <end position="806"/>
    </location>
</feature>
<feature type="domain" description="Protein kinase 2" evidence="5">
    <location>
        <begin position="846"/>
        <end position="1118"/>
    </location>
</feature>
<feature type="active site" description="Proton acceptor" evidence="5 7">
    <location>
        <position position="973"/>
    </location>
</feature>
<feature type="binding site" evidence="5">
    <location>
        <begin position="852"/>
        <end position="860"/>
    </location>
    <ligand>
        <name>ATP</name>
        <dbReference type="ChEBI" id="CHEBI:30616"/>
    </ligand>
</feature>
<feature type="binding site" evidence="5">
    <location>
        <position position="879"/>
    </location>
    <ligand>
        <name>ATP</name>
        <dbReference type="ChEBI" id="CHEBI:30616"/>
    </ligand>
</feature>
<feature type="modified residue" description="Phosphotyrosine; by autocatalysis" evidence="3">
    <location>
        <position position="117"/>
    </location>
</feature>
<feature type="modified residue" description="Phosphotyrosine; by autocatalysis" evidence="3">
    <location>
        <position position="865"/>
    </location>
</feature>
<feature type="modified residue" description="Phosphotyrosine; by autocatalysis" evidence="3">
    <location>
        <position position="963"/>
    </location>
</feature>
<feature type="modified residue" description="Phosphotyrosine; by autocatalysis" evidence="3">
    <location>
        <position position="969"/>
    </location>
</feature>
<feature type="modified residue" description="Phosphotyrosine; by autocatalysis" evidence="2">
    <location>
        <position position="1004"/>
    </location>
</feature>
<feature type="modified residue" description="Phosphotyrosine; by autocatalysis" evidence="2">
    <location>
        <position position="1005"/>
    </location>
</feature>
<name>JAK2_CHICK</name>
<comment type="function">
    <text evidence="2">Non-receptor tyrosine kinase involved in various processes such as cell growth, development, differentiation or histone modifications. Mediates essential signaling events in both innate and adaptive immunity. In the cytoplasm, plays a pivotal role in signal transduction via its association with cytokine receptors. Following ligand-binding to cell surface receptors, phosphorylates specific tyrosine residues on the cytoplasmic tails of the receptor, creating docking sites for STATs proteins. Subsequently, phosphorylates the STATs proteins once they are recruited to the receptor. Phosphorylated STATs then form homodimer or heterodimers and translocate to the nucleus to activate gene transcription. For example, cell stimulation with erythropoietin (EPO) during erythropoiesis leads to JAK2 autophosphorylation, activation, and its association with erythropoietin receptor (EPOR) that becomes phosphorylated in its cytoplasmic domain. Then, STAT5 (STAT5A or STAT5B) is recruited, phosphorylated and activated by JAK2. Once activated, dimerized STAT5 translocates into the nucleus and promotes the transcription of several essential genes involved in the modulation of erythropoiesis. Part of a signaling cascade that is activated by increased cellular retinol and that leads to the activation of STAT5 (STAT5A or STAT5B). In the nucleus, plays a key role in chromatin by specifically mediating phosphorylation of 'Tyr-41' of histone H3 (H3Y41ph), a specific tag that promotes exclusion of CBX5 (HP1 alpha) from chromatin. Up-regulates the potassium voltage-gated channel activity of KCNA3.</text>
</comment>
<comment type="catalytic activity">
    <reaction evidence="7">
        <text>L-tyrosyl-[protein] + ATP = O-phospho-L-tyrosyl-[protein] + ADP + H(+)</text>
        <dbReference type="Rhea" id="RHEA:10596"/>
        <dbReference type="Rhea" id="RHEA-COMP:10136"/>
        <dbReference type="Rhea" id="RHEA-COMP:20101"/>
        <dbReference type="ChEBI" id="CHEBI:15378"/>
        <dbReference type="ChEBI" id="CHEBI:30616"/>
        <dbReference type="ChEBI" id="CHEBI:46858"/>
        <dbReference type="ChEBI" id="CHEBI:61978"/>
        <dbReference type="ChEBI" id="CHEBI:456216"/>
        <dbReference type="EC" id="2.7.10.2"/>
    </reaction>
</comment>
<comment type="activity regulation">
    <text evidence="2 3">Regulated by autophosphorylation, can both activate or decrease activity. Heme regulates its activity by enhancing the phosphorylation on Tyr-1004 and Tyr-1005.</text>
</comment>
<comment type="subcellular location">
    <subcellularLocation>
        <location evidence="1">Endomembrane system</location>
        <topology evidence="1">Peripheral membrane protein</topology>
    </subcellularLocation>
    <subcellularLocation>
        <location evidence="1">Nucleus</location>
    </subcellularLocation>
</comment>
<comment type="domain">
    <text evidence="1">Possesses 2 protein kinase domains. The second one probably contains the catalytic domain, while the presence of slight differences suggest a different role for protein kinase 1 (By similarity).</text>
</comment>
<comment type="PTM">
    <text evidence="2 3">Autophosphorylated, leading to regulate its activity.</text>
</comment>
<comment type="similarity">
    <text evidence="5">Belongs to the protein kinase superfamily. Tyr protein kinase family. JAK subfamily.</text>
</comment>
<proteinExistence type="evidence at transcript level"/>
<gene>
    <name evidence="2" type="primary">JAK2</name>
</gene>
<dbReference type="EC" id="2.7.10.2" evidence="2"/>
<dbReference type="EMBL" id="AB159042">
    <property type="protein sequence ID" value="BAD07298.1"/>
    <property type="molecule type" value="mRNA"/>
</dbReference>
<dbReference type="SMR" id="Q75R65"/>
<dbReference type="FunCoup" id="Q75R65">
    <property type="interactions" value="1406"/>
</dbReference>
<dbReference type="STRING" id="9031.ENSGALP00000074116"/>
<dbReference type="PaxDb" id="9031-ENSGALP00000037587"/>
<dbReference type="VEuPathDB" id="HostDB:geneid_374199"/>
<dbReference type="eggNOG" id="KOG0197">
    <property type="taxonomic scope" value="Eukaryota"/>
</dbReference>
<dbReference type="InParanoid" id="Q75R65"/>
<dbReference type="OrthoDB" id="1915767at2759"/>
<dbReference type="PhylomeDB" id="Q75R65"/>
<dbReference type="Proteomes" id="UP000000539">
    <property type="component" value="Unassembled WGS sequence"/>
</dbReference>
<dbReference type="GO" id="GO:0005856">
    <property type="term" value="C:cytoskeleton"/>
    <property type="evidence" value="ECO:0007669"/>
    <property type="project" value="InterPro"/>
</dbReference>
<dbReference type="GO" id="GO:0005829">
    <property type="term" value="C:cytosol"/>
    <property type="evidence" value="ECO:0000318"/>
    <property type="project" value="GO_Central"/>
</dbReference>
<dbReference type="GO" id="GO:0012505">
    <property type="term" value="C:endomembrane system"/>
    <property type="evidence" value="ECO:0007669"/>
    <property type="project" value="UniProtKB-SubCell"/>
</dbReference>
<dbReference type="GO" id="GO:0016020">
    <property type="term" value="C:membrane"/>
    <property type="evidence" value="ECO:0007669"/>
    <property type="project" value="UniProtKB-KW"/>
</dbReference>
<dbReference type="GO" id="GO:0005634">
    <property type="term" value="C:nucleus"/>
    <property type="evidence" value="ECO:0000250"/>
    <property type="project" value="UniProtKB"/>
</dbReference>
<dbReference type="GO" id="GO:0005524">
    <property type="term" value="F:ATP binding"/>
    <property type="evidence" value="ECO:0007669"/>
    <property type="project" value="UniProtKB-KW"/>
</dbReference>
<dbReference type="GO" id="GO:0005131">
    <property type="term" value="F:growth hormone receptor binding"/>
    <property type="evidence" value="ECO:0000318"/>
    <property type="project" value="GO_Central"/>
</dbReference>
<dbReference type="GO" id="GO:0020037">
    <property type="term" value="F:heme binding"/>
    <property type="evidence" value="ECO:0000250"/>
    <property type="project" value="UniProtKB"/>
</dbReference>
<dbReference type="GO" id="GO:0042393">
    <property type="term" value="F:histone binding"/>
    <property type="evidence" value="ECO:0007669"/>
    <property type="project" value="InterPro"/>
</dbReference>
<dbReference type="GO" id="GO:0035401">
    <property type="term" value="F:histone H3Y41 kinase activity"/>
    <property type="evidence" value="ECO:0000250"/>
    <property type="project" value="UniProtKB"/>
</dbReference>
<dbReference type="GO" id="GO:0004715">
    <property type="term" value="F:non-membrane spanning protein tyrosine kinase activity"/>
    <property type="evidence" value="ECO:0000318"/>
    <property type="project" value="GO_Central"/>
</dbReference>
<dbReference type="GO" id="GO:0004713">
    <property type="term" value="F:protein tyrosine kinase activity"/>
    <property type="evidence" value="ECO:0000250"/>
    <property type="project" value="UniProtKB"/>
</dbReference>
<dbReference type="GO" id="GO:0042976">
    <property type="term" value="P:activation of Janus kinase activity"/>
    <property type="evidence" value="ECO:0000250"/>
    <property type="project" value="UniProtKB"/>
</dbReference>
<dbReference type="GO" id="GO:0007259">
    <property type="term" value="P:cell surface receptor signaling pathway via JAK-STAT"/>
    <property type="evidence" value="ECO:0000318"/>
    <property type="project" value="GO_Central"/>
</dbReference>
<dbReference type="GO" id="GO:0019221">
    <property type="term" value="P:cytokine-mediated signaling pathway"/>
    <property type="evidence" value="ECO:0000250"/>
    <property type="project" value="UniProtKB"/>
</dbReference>
<dbReference type="GO" id="GO:0030218">
    <property type="term" value="P:erythrocyte differentiation"/>
    <property type="evidence" value="ECO:0000250"/>
    <property type="project" value="UniProtKB"/>
</dbReference>
<dbReference type="GO" id="GO:0060397">
    <property type="term" value="P:growth hormone receptor signaling pathway via JAK-STAT"/>
    <property type="evidence" value="ECO:0000250"/>
    <property type="project" value="UniProtKB"/>
</dbReference>
<dbReference type="GO" id="GO:0035556">
    <property type="term" value="P:intracellular signal transduction"/>
    <property type="evidence" value="ECO:0000318"/>
    <property type="project" value="GO_Central"/>
</dbReference>
<dbReference type="GO" id="GO:0008284">
    <property type="term" value="P:positive regulation of cell population proliferation"/>
    <property type="evidence" value="ECO:0007669"/>
    <property type="project" value="UniProtKB-ARBA"/>
</dbReference>
<dbReference type="GO" id="GO:0043687">
    <property type="term" value="P:post-translational protein modification"/>
    <property type="evidence" value="ECO:0000250"/>
    <property type="project" value="UniProtKB"/>
</dbReference>
<dbReference type="GO" id="GO:0046777">
    <property type="term" value="P:protein autophosphorylation"/>
    <property type="evidence" value="ECO:0000250"/>
    <property type="project" value="UniProtKB"/>
</dbReference>
<dbReference type="GO" id="GO:0042981">
    <property type="term" value="P:regulation of apoptotic process"/>
    <property type="evidence" value="ECO:0000318"/>
    <property type="project" value="GO_Central"/>
</dbReference>
<dbReference type="GO" id="GO:0050865">
    <property type="term" value="P:regulation of cell activation"/>
    <property type="evidence" value="ECO:0007669"/>
    <property type="project" value="UniProtKB-ARBA"/>
</dbReference>
<dbReference type="GO" id="GO:0022407">
    <property type="term" value="P:regulation of cell-cell adhesion"/>
    <property type="evidence" value="ECO:0007669"/>
    <property type="project" value="UniProtKB-ARBA"/>
</dbReference>
<dbReference type="GO" id="GO:0007165">
    <property type="term" value="P:signal transduction"/>
    <property type="evidence" value="ECO:0000250"/>
    <property type="project" value="UniProtKB"/>
</dbReference>
<dbReference type="CDD" id="cd14473">
    <property type="entry name" value="FERM_B-lobe"/>
    <property type="match status" value="1"/>
</dbReference>
<dbReference type="CDD" id="cd13333">
    <property type="entry name" value="FERM_C_JAK2"/>
    <property type="match status" value="1"/>
</dbReference>
<dbReference type="CDD" id="cd05078">
    <property type="entry name" value="PTK_Jak2_rpt1"/>
    <property type="match status" value="1"/>
</dbReference>
<dbReference type="CDD" id="cd14205">
    <property type="entry name" value="PTKc_Jak2_rpt2"/>
    <property type="match status" value="1"/>
</dbReference>
<dbReference type="CDD" id="cd10379">
    <property type="entry name" value="SH2_Jak2"/>
    <property type="match status" value="1"/>
</dbReference>
<dbReference type="FunFam" id="1.10.510.10:FF:000110">
    <property type="entry name" value="Tyrosine-protein kinase"/>
    <property type="match status" value="1"/>
</dbReference>
<dbReference type="FunFam" id="2.30.29.30:FF:000177">
    <property type="entry name" value="Tyrosine-protein kinase"/>
    <property type="match status" value="1"/>
</dbReference>
<dbReference type="FunFam" id="3.30.200.20:FF:000084">
    <property type="entry name" value="Tyrosine-protein kinase"/>
    <property type="match status" value="1"/>
</dbReference>
<dbReference type="FunFam" id="3.30.200.20:FF:000135">
    <property type="entry name" value="Tyrosine-protein kinase"/>
    <property type="match status" value="1"/>
</dbReference>
<dbReference type="FunFam" id="3.30.505.10:FF:000037">
    <property type="entry name" value="Tyrosine-protein kinase"/>
    <property type="match status" value="1"/>
</dbReference>
<dbReference type="FunFam" id="1.10.510.10:FF:000114">
    <property type="entry name" value="Tyrosine-protein kinase JAK2"/>
    <property type="match status" value="1"/>
</dbReference>
<dbReference type="Gene3D" id="3.30.200.20">
    <property type="entry name" value="Phosphorylase Kinase, domain 1"/>
    <property type="match status" value="2"/>
</dbReference>
<dbReference type="Gene3D" id="2.30.29.30">
    <property type="entry name" value="Pleckstrin-homology domain (PH domain)/Phosphotyrosine-binding domain (PTB)"/>
    <property type="match status" value="1"/>
</dbReference>
<dbReference type="Gene3D" id="3.30.505.10">
    <property type="entry name" value="SH2 domain"/>
    <property type="match status" value="1"/>
</dbReference>
<dbReference type="Gene3D" id="1.10.510.10">
    <property type="entry name" value="Transferase(Phosphotransferase) domain 1"/>
    <property type="match status" value="2"/>
</dbReference>
<dbReference type="InterPro" id="IPR019749">
    <property type="entry name" value="Band_41_domain"/>
</dbReference>
<dbReference type="InterPro" id="IPR035963">
    <property type="entry name" value="FERM_2"/>
</dbReference>
<dbReference type="InterPro" id="IPR019748">
    <property type="entry name" value="FERM_central"/>
</dbReference>
<dbReference type="InterPro" id="IPR000299">
    <property type="entry name" value="FERM_domain"/>
</dbReference>
<dbReference type="InterPro" id="IPR041155">
    <property type="entry name" value="FERM_F1"/>
</dbReference>
<dbReference type="InterPro" id="IPR041046">
    <property type="entry name" value="FERM_F2"/>
</dbReference>
<dbReference type="InterPro" id="IPR051286">
    <property type="entry name" value="JAK"/>
</dbReference>
<dbReference type="InterPro" id="IPR041381">
    <property type="entry name" value="JAK1-3/TYK2_PHL_dom"/>
</dbReference>
<dbReference type="InterPro" id="IPR037838">
    <property type="entry name" value="JAK2_FERM_C-lobe"/>
</dbReference>
<dbReference type="InterPro" id="IPR035860">
    <property type="entry name" value="JAK2_SH2"/>
</dbReference>
<dbReference type="InterPro" id="IPR011009">
    <property type="entry name" value="Kinase-like_dom_sf"/>
</dbReference>
<dbReference type="InterPro" id="IPR011993">
    <property type="entry name" value="PH-like_dom_sf"/>
</dbReference>
<dbReference type="InterPro" id="IPR000719">
    <property type="entry name" value="Prot_kinase_dom"/>
</dbReference>
<dbReference type="InterPro" id="IPR017441">
    <property type="entry name" value="Protein_kinase_ATP_BS"/>
</dbReference>
<dbReference type="InterPro" id="IPR035588">
    <property type="entry name" value="PTK_Jak2_rpt1"/>
</dbReference>
<dbReference type="InterPro" id="IPR035589">
    <property type="entry name" value="PTKc_Jak2_rpt2"/>
</dbReference>
<dbReference type="InterPro" id="IPR001245">
    <property type="entry name" value="Ser-Thr/Tyr_kinase_cat_dom"/>
</dbReference>
<dbReference type="InterPro" id="IPR000980">
    <property type="entry name" value="SH2"/>
</dbReference>
<dbReference type="InterPro" id="IPR036860">
    <property type="entry name" value="SH2_dom_sf"/>
</dbReference>
<dbReference type="InterPro" id="IPR008266">
    <property type="entry name" value="Tyr_kinase_AS"/>
</dbReference>
<dbReference type="InterPro" id="IPR020635">
    <property type="entry name" value="Tyr_kinase_cat_dom"/>
</dbReference>
<dbReference type="InterPro" id="IPR016251">
    <property type="entry name" value="Tyr_kinase_non-rcpt_Jak/Tyk2"/>
</dbReference>
<dbReference type="InterPro" id="IPR020693">
    <property type="entry name" value="Tyr_kinase_non-rcpt_Jak2"/>
</dbReference>
<dbReference type="PANTHER" id="PTHR45807">
    <property type="entry name" value="TYROSINE-PROTEIN KINASE HOPSCOTCH"/>
    <property type="match status" value="1"/>
</dbReference>
<dbReference type="PANTHER" id="PTHR45807:SF1">
    <property type="entry name" value="TYROSINE-PROTEIN KINASE JAK2"/>
    <property type="match status" value="1"/>
</dbReference>
<dbReference type="Pfam" id="PF18379">
    <property type="entry name" value="FERM_F1"/>
    <property type="match status" value="1"/>
</dbReference>
<dbReference type="Pfam" id="PF18377">
    <property type="entry name" value="FERM_F2"/>
    <property type="match status" value="1"/>
</dbReference>
<dbReference type="Pfam" id="PF17887">
    <property type="entry name" value="Jak1_Phl"/>
    <property type="match status" value="1"/>
</dbReference>
<dbReference type="Pfam" id="PF07714">
    <property type="entry name" value="PK_Tyr_Ser-Thr"/>
    <property type="match status" value="2"/>
</dbReference>
<dbReference type="Pfam" id="PF21990">
    <property type="entry name" value="SH2_1"/>
    <property type="match status" value="1"/>
</dbReference>
<dbReference type="PIRSF" id="PIRSF000636">
    <property type="entry name" value="TyrPK_Jak"/>
    <property type="match status" value="1"/>
</dbReference>
<dbReference type="PRINTS" id="PR01823">
    <property type="entry name" value="JANUSKINASE"/>
</dbReference>
<dbReference type="PRINTS" id="PR01825">
    <property type="entry name" value="JANUSKINASE2"/>
</dbReference>
<dbReference type="PRINTS" id="PR00109">
    <property type="entry name" value="TYRKINASE"/>
</dbReference>
<dbReference type="SMART" id="SM00295">
    <property type="entry name" value="B41"/>
    <property type="match status" value="1"/>
</dbReference>
<dbReference type="SMART" id="SM00252">
    <property type="entry name" value="SH2"/>
    <property type="match status" value="1"/>
</dbReference>
<dbReference type="SMART" id="SM00219">
    <property type="entry name" value="TyrKc"/>
    <property type="match status" value="2"/>
</dbReference>
<dbReference type="SUPFAM" id="SSF50729">
    <property type="entry name" value="PH domain-like"/>
    <property type="match status" value="1"/>
</dbReference>
<dbReference type="SUPFAM" id="SSF56112">
    <property type="entry name" value="Protein kinase-like (PK-like)"/>
    <property type="match status" value="2"/>
</dbReference>
<dbReference type="SUPFAM" id="SSF47031">
    <property type="entry name" value="Second domain of FERM"/>
    <property type="match status" value="1"/>
</dbReference>
<dbReference type="SUPFAM" id="SSF55550">
    <property type="entry name" value="SH2 domain"/>
    <property type="match status" value="1"/>
</dbReference>
<dbReference type="PROSITE" id="PS50057">
    <property type="entry name" value="FERM_3"/>
    <property type="match status" value="1"/>
</dbReference>
<dbReference type="PROSITE" id="PS00107">
    <property type="entry name" value="PROTEIN_KINASE_ATP"/>
    <property type="match status" value="1"/>
</dbReference>
<dbReference type="PROSITE" id="PS50011">
    <property type="entry name" value="PROTEIN_KINASE_DOM"/>
    <property type="match status" value="2"/>
</dbReference>
<dbReference type="PROSITE" id="PS00109">
    <property type="entry name" value="PROTEIN_KINASE_TYR"/>
    <property type="match status" value="1"/>
</dbReference>
<dbReference type="PROSITE" id="PS50001">
    <property type="entry name" value="SH2"/>
    <property type="match status" value="1"/>
</dbReference>
<sequence>MACLTMANIEGSATATVHQNGDILGNTSAPKQTEPLLQVYLYYSPGKTGGDYLQFPAGEYVAEEICIVACKACGIMPVYHNMFALMSETERVWYPPNHIFHVDEATRLKLLYRIRFYFPHWYCNGTSRACRYGIIRGSESPVLDDLVMSYLFAQWRKDFLDGWIQMPVTHETQEECLGMAVLDMMRVAKEKDQTPLAVYNSVSYKMFLPKCVRAKIQEYHILTRKRIRYRFRKFIQQFGQCKATARNLKLKYLINLETLQSAFYSEVFEVKEPGGDPSGEESFATIVITGNGGIQCSRGKLKNCETLAEQDLQTYCDFPDIIDVSIKQASQEGSSERRIVTIHKQDSKNLEAEFQSLREALSFVSLIDGYYRLTADAHHYLCKEVAPPSVLENIQSNCHGPIFMDFAINKLKKAGNQTGFYVLRCSPKDFKKYFLTFAIERENATDYKHCLITKNENGEYNLSGTKRSFGNLKDLLTCYQTETVRSDSIIFQFIKCCPPKPKDKSNLLVFRSNSVSDVPSSPTLQRHNVSQMVFHKIRNEDLIFEESLGQGTFTKIFKGIRKEVGDYGQLHQTEVLLKVLDKVHRNYSESFFEAASMMSQLSYKHLVLNYGVCVCGEENILVQEYVKFGSLDTYLKKNKNVINILWKLEVAKQLALAMHFLEDKGLVHGNVCAKNILLIREEDRKSGNLPFIKLSDPGISITVLPRDILLERIPWVPPECIENPRQLSLATDKWSFGTTLWEICSGGDKPLSALDSSRKLQFYEDRHQLPAPNWTELANLINNCMDYEPDFRPSFRAIIRDLNSLFTPDYELLTENDMLPNIRTGALGFSGAFEDRDPTQFEERHLKFLQQLGKGNFGSVEMCRYDPLQDNTGEVVAVKKLQHSTEEHLRDFEREIEILKSLQHDNIVKYKGVCYSAGRRNLRLIMEYLPYGSLRDYLQKHKERLDHKKLLLYASQICKGMEYLGTKRYVHRDLATRNILVENENRVKIGDFGLTKVLPQDKEYYKVKEPGESPIFWYAPESLTESKFSVASDVWSFGVVLYELFTYIEKSKSPPAEFMRMIGNDKQGQMIVFHLIELLKNNGRLPRPDGCPDEIYAIMKECWNNNVAQRPTFRDLAQRVDQIRDNMGG</sequence>
<accession>Q75R65</accession>
<organism>
    <name type="scientific">Gallus gallus</name>
    <name type="common">Chicken</name>
    <dbReference type="NCBI Taxonomy" id="9031"/>
    <lineage>
        <taxon>Eukaryota</taxon>
        <taxon>Metazoa</taxon>
        <taxon>Chordata</taxon>
        <taxon>Craniata</taxon>
        <taxon>Vertebrata</taxon>
        <taxon>Euteleostomi</taxon>
        <taxon>Archelosauria</taxon>
        <taxon>Archosauria</taxon>
        <taxon>Dinosauria</taxon>
        <taxon>Saurischia</taxon>
        <taxon>Theropoda</taxon>
        <taxon>Coelurosauria</taxon>
        <taxon>Aves</taxon>
        <taxon>Neognathae</taxon>
        <taxon>Galloanserae</taxon>
        <taxon>Galliformes</taxon>
        <taxon>Phasianidae</taxon>
        <taxon>Phasianinae</taxon>
        <taxon>Gallus</taxon>
    </lineage>
</organism>
<reference key="1">
    <citation type="submission" date="2004-01" db="EMBL/GenBank/DDBJ databases">
        <title>molecular cloning and characterization of chicken tyrosine kinase JAK-2.</title>
        <authorList>
            <person name="Sayed A.A."/>
            <person name="Horiuchi H."/>
            <person name="Furusawa S."/>
            <person name="Matsuda H."/>
        </authorList>
    </citation>
    <scope>NUCLEOTIDE SEQUENCE [MRNA]</scope>
    <source>
        <strain>White leghorn</strain>
        <tissue>Spleen</tissue>
    </source>
</reference>